<protein>
    <recommendedName>
        <fullName evidence="1">Phosphomethylpyrimidine synthase</fullName>
        <ecNumber evidence="1">4.1.99.17</ecNumber>
    </recommendedName>
    <alternativeName>
        <fullName evidence="1">Hydroxymethylpyrimidine phosphate synthase</fullName>
        <shortName evidence="1">HMP-P synthase</shortName>
        <shortName evidence="1">HMP-phosphate synthase</shortName>
        <shortName evidence="1">HMPP synthase</shortName>
    </alternativeName>
    <alternativeName>
        <fullName evidence="1">Thiamine biosynthesis protein ThiC</fullName>
    </alternativeName>
</protein>
<feature type="chain" id="PRO_1000198047" description="Phosphomethylpyrimidine synthase">
    <location>
        <begin position="1"/>
        <end position="586"/>
    </location>
</feature>
<feature type="region of interest" description="Disordered" evidence="2">
    <location>
        <begin position="1"/>
        <end position="33"/>
    </location>
</feature>
<feature type="compositionally biased region" description="Basic and acidic residues" evidence="2">
    <location>
        <begin position="22"/>
        <end position="33"/>
    </location>
</feature>
<feature type="binding site" evidence="1">
    <location>
        <position position="193"/>
    </location>
    <ligand>
        <name>substrate</name>
    </ligand>
</feature>
<feature type="binding site" evidence="1">
    <location>
        <position position="222"/>
    </location>
    <ligand>
        <name>substrate</name>
    </ligand>
</feature>
<feature type="binding site" evidence="1">
    <location>
        <position position="251"/>
    </location>
    <ligand>
        <name>substrate</name>
    </ligand>
</feature>
<feature type="binding site" evidence="1">
    <location>
        <position position="287"/>
    </location>
    <ligand>
        <name>substrate</name>
    </ligand>
</feature>
<feature type="binding site" evidence="1">
    <location>
        <begin position="307"/>
        <end position="309"/>
    </location>
    <ligand>
        <name>substrate</name>
    </ligand>
</feature>
<feature type="binding site" evidence="1">
    <location>
        <begin position="348"/>
        <end position="351"/>
    </location>
    <ligand>
        <name>substrate</name>
    </ligand>
</feature>
<feature type="binding site" evidence="1">
    <location>
        <position position="387"/>
    </location>
    <ligand>
        <name>substrate</name>
    </ligand>
</feature>
<feature type="binding site" evidence="1">
    <location>
        <position position="391"/>
    </location>
    <ligand>
        <name>Zn(2+)</name>
        <dbReference type="ChEBI" id="CHEBI:29105"/>
    </ligand>
</feature>
<feature type="binding site" evidence="1">
    <location>
        <position position="414"/>
    </location>
    <ligand>
        <name>substrate</name>
    </ligand>
</feature>
<feature type="binding site" evidence="1">
    <location>
        <position position="455"/>
    </location>
    <ligand>
        <name>Zn(2+)</name>
        <dbReference type="ChEBI" id="CHEBI:29105"/>
    </ligand>
</feature>
<feature type="binding site" evidence="1">
    <location>
        <position position="535"/>
    </location>
    <ligand>
        <name>[4Fe-4S] cluster</name>
        <dbReference type="ChEBI" id="CHEBI:49883"/>
        <note>4Fe-4S-S-AdoMet</note>
    </ligand>
</feature>
<feature type="binding site" evidence="1">
    <location>
        <position position="538"/>
    </location>
    <ligand>
        <name>[4Fe-4S] cluster</name>
        <dbReference type="ChEBI" id="CHEBI:49883"/>
        <note>4Fe-4S-S-AdoMet</note>
    </ligand>
</feature>
<feature type="binding site" evidence="1">
    <location>
        <position position="543"/>
    </location>
    <ligand>
        <name>[4Fe-4S] cluster</name>
        <dbReference type="ChEBI" id="CHEBI:49883"/>
        <note>4Fe-4S-S-AdoMet</note>
    </ligand>
</feature>
<name>THIC_BACC2</name>
<keyword id="KW-0004">4Fe-4S</keyword>
<keyword id="KW-0408">Iron</keyword>
<keyword id="KW-0411">Iron-sulfur</keyword>
<keyword id="KW-0456">Lyase</keyword>
<keyword id="KW-0479">Metal-binding</keyword>
<keyword id="KW-0949">S-adenosyl-L-methionine</keyword>
<keyword id="KW-0784">Thiamine biosynthesis</keyword>
<keyword id="KW-0862">Zinc</keyword>
<accession>B7IPY9</accession>
<sequence>MKQSVSAEQIELKSSLPGSKKVYVDGPREGMKVPMREIEQSETNGVPNPPIRVYDTSGPYTDPAYKVELEKGIPTPRHSWIMGRGDVDAYEGREVKPEDDGVKVASKHTPVFPQMDRKPLRAKQGANVTQMHYARNGIITSEMEYVAIREGVEPEFVRKEIAEGRAILPANINHPEAEPMIIGRNFHVKVNANIGNSAVSSSIAEEVEKMTWATRWGADTIMDLSTGKNIHTTREWIIRNAPVPVGTVPIYQALEKVNGIAEDLTWEVYRDTLIEQAEQGVDYFTIHAGVLLRYIPITAKRTTGIVSRGGSIMAQWCLFHHKENFLYTHFEEICEIMKQYDVSFSLGDGLRPGSIADANDEAQFSELETLGELTKIAWKHDVQVMIEGPGHVPMHLIKENMEKELDICQGAPFYTLGPLTTDIAPGYDHITSAIGAAMIGWFGTAMLCYVTPKEHLGLPNKDDVRTGVITYKIAAHAADLAKGHKTAHQRDDALSKARFEFRWRDQFNLSLDPERAMEYHDETLPAEGAKTAHFCSMCGPKFCSMRISHDIREYAKENDLETTEAIEKGMKEKAEEFKEAGSHLYQ</sequence>
<organism>
    <name type="scientific">Bacillus cereus (strain G9842)</name>
    <dbReference type="NCBI Taxonomy" id="405531"/>
    <lineage>
        <taxon>Bacteria</taxon>
        <taxon>Bacillati</taxon>
        <taxon>Bacillota</taxon>
        <taxon>Bacilli</taxon>
        <taxon>Bacillales</taxon>
        <taxon>Bacillaceae</taxon>
        <taxon>Bacillus</taxon>
        <taxon>Bacillus cereus group</taxon>
    </lineage>
</organism>
<reference key="1">
    <citation type="submission" date="2008-10" db="EMBL/GenBank/DDBJ databases">
        <title>Genome sequence of Bacillus cereus G9842.</title>
        <authorList>
            <person name="Dodson R.J."/>
            <person name="Durkin A.S."/>
            <person name="Rosovitz M.J."/>
            <person name="Rasko D.A."/>
            <person name="Hoffmaster A."/>
            <person name="Ravel J."/>
            <person name="Sutton G."/>
        </authorList>
    </citation>
    <scope>NUCLEOTIDE SEQUENCE [LARGE SCALE GENOMIC DNA]</scope>
    <source>
        <strain>G9842</strain>
    </source>
</reference>
<gene>
    <name evidence="1" type="primary">thiC</name>
    <name type="ordered locus">BCG9842_B5612</name>
</gene>
<proteinExistence type="inferred from homology"/>
<dbReference type="EC" id="4.1.99.17" evidence="1"/>
<dbReference type="EMBL" id="CP001186">
    <property type="protein sequence ID" value="ACK94072.1"/>
    <property type="molecule type" value="Genomic_DNA"/>
</dbReference>
<dbReference type="RefSeq" id="WP_000814475.1">
    <property type="nucleotide sequence ID" value="NC_011772.1"/>
</dbReference>
<dbReference type="SMR" id="B7IPY9"/>
<dbReference type="KEGG" id="bcg:BCG9842_B5612"/>
<dbReference type="HOGENOM" id="CLU_013181_2_1_9"/>
<dbReference type="UniPathway" id="UPA00060"/>
<dbReference type="Proteomes" id="UP000006744">
    <property type="component" value="Chromosome"/>
</dbReference>
<dbReference type="GO" id="GO:0005829">
    <property type="term" value="C:cytosol"/>
    <property type="evidence" value="ECO:0007669"/>
    <property type="project" value="TreeGrafter"/>
</dbReference>
<dbReference type="GO" id="GO:0051539">
    <property type="term" value="F:4 iron, 4 sulfur cluster binding"/>
    <property type="evidence" value="ECO:0007669"/>
    <property type="project" value="UniProtKB-KW"/>
</dbReference>
<dbReference type="GO" id="GO:0016830">
    <property type="term" value="F:carbon-carbon lyase activity"/>
    <property type="evidence" value="ECO:0007669"/>
    <property type="project" value="InterPro"/>
</dbReference>
<dbReference type="GO" id="GO:0008270">
    <property type="term" value="F:zinc ion binding"/>
    <property type="evidence" value="ECO:0007669"/>
    <property type="project" value="UniProtKB-UniRule"/>
</dbReference>
<dbReference type="GO" id="GO:0009228">
    <property type="term" value="P:thiamine biosynthetic process"/>
    <property type="evidence" value="ECO:0007669"/>
    <property type="project" value="UniProtKB-KW"/>
</dbReference>
<dbReference type="GO" id="GO:0009229">
    <property type="term" value="P:thiamine diphosphate biosynthetic process"/>
    <property type="evidence" value="ECO:0007669"/>
    <property type="project" value="UniProtKB-UniRule"/>
</dbReference>
<dbReference type="FunFam" id="3.20.20.540:FF:000001">
    <property type="entry name" value="Phosphomethylpyrimidine synthase"/>
    <property type="match status" value="1"/>
</dbReference>
<dbReference type="Gene3D" id="6.10.250.620">
    <property type="match status" value="1"/>
</dbReference>
<dbReference type="Gene3D" id="3.20.20.540">
    <property type="entry name" value="Radical SAM ThiC family, central domain"/>
    <property type="match status" value="1"/>
</dbReference>
<dbReference type="HAMAP" id="MF_00089">
    <property type="entry name" value="ThiC"/>
    <property type="match status" value="1"/>
</dbReference>
<dbReference type="InterPro" id="IPR037509">
    <property type="entry name" value="ThiC"/>
</dbReference>
<dbReference type="InterPro" id="IPR025747">
    <property type="entry name" value="ThiC-associated_dom"/>
</dbReference>
<dbReference type="InterPro" id="IPR038521">
    <property type="entry name" value="ThiC/Bza_core_dom"/>
</dbReference>
<dbReference type="InterPro" id="IPR002817">
    <property type="entry name" value="ThiC/BzaA/B"/>
</dbReference>
<dbReference type="NCBIfam" id="NF006763">
    <property type="entry name" value="PRK09284.1"/>
    <property type="match status" value="1"/>
</dbReference>
<dbReference type="NCBIfam" id="NF009895">
    <property type="entry name" value="PRK13352.1"/>
    <property type="match status" value="1"/>
</dbReference>
<dbReference type="NCBIfam" id="TIGR00190">
    <property type="entry name" value="thiC"/>
    <property type="match status" value="1"/>
</dbReference>
<dbReference type="PANTHER" id="PTHR30557:SF1">
    <property type="entry name" value="PHOSPHOMETHYLPYRIMIDINE SYNTHASE, CHLOROPLASTIC"/>
    <property type="match status" value="1"/>
</dbReference>
<dbReference type="PANTHER" id="PTHR30557">
    <property type="entry name" value="THIAMINE BIOSYNTHESIS PROTEIN THIC"/>
    <property type="match status" value="1"/>
</dbReference>
<dbReference type="Pfam" id="PF13667">
    <property type="entry name" value="ThiC-associated"/>
    <property type="match status" value="1"/>
</dbReference>
<dbReference type="Pfam" id="PF01964">
    <property type="entry name" value="ThiC_Rad_SAM"/>
    <property type="match status" value="1"/>
</dbReference>
<dbReference type="SFLD" id="SFLDF00407">
    <property type="entry name" value="phosphomethylpyrimidine_syntha"/>
    <property type="match status" value="1"/>
</dbReference>
<dbReference type="SFLD" id="SFLDG01114">
    <property type="entry name" value="phosphomethylpyrimidine_syntha"/>
    <property type="match status" value="1"/>
</dbReference>
<dbReference type="SFLD" id="SFLDS00113">
    <property type="entry name" value="Radical_SAM_Phosphomethylpyrim"/>
    <property type="match status" value="1"/>
</dbReference>
<evidence type="ECO:0000255" key="1">
    <source>
        <dbReference type="HAMAP-Rule" id="MF_00089"/>
    </source>
</evidence>
<evidence type="ECO:0000256" key="2">
    <source>
        <dbReference type="SAM" id="MobiDB-lite"/>
    </source>
</evidence>
<comment type="function">
    <text evidence="1">Catalyzes the synthesis of the hydroxymethylpyrimidine phosphate (HMP-P) moiety of thiamine from aminoimidazole ribotide (AIR) in a radical S-adenosyl-L-methionine (SAM)-dependent reaction.</text>
</comment>
<comment type="catalytic activity">
    <reaction evidence="1">
        <text>5-amino-1-(5-phospho-beta-D-ribosyl)imidazole + S-adenosyl-L-methionine = 4-amino-2-methyl-5-(phosphooxymethyl)pyrimidine + CO + 5'-deoxyadenosine + formate + L-methionine + 3 H(+)</text>
        <dbReference type="Rhea" id="RHEA:24840"/>
        <dbReference type="ChEBI" id="CHEBI:15378"/>
        <dbReference type="ChEBI" id="CHEBI:15740"/>
        <dbReference type="ChEBI" id="CHEBI:17245"/>
        <dbReference type="ChEBI" id="CHEBI:17319"/>
        <dbReference type="ChEBI" id="CHEBI:57844"/>
        <dbReference type="ChEBI" id="CHEBI:58354"/>
        <dbReference type="ChEBI" id="CHEBI:59789"/>
        <dbReference type="ChEBI" id="CHEBI:137981"/>
        <dbReference type="EC" id="4.1.99.17"/>
    </reaction>
</comment>
<comment type="cofactor">
    <cofactor evidence="1">
        <name>[4Fe-4S] cluster</name>
        <dbReference type="ChEBI" id="CHEBI:49883"/>
    </cofactor>
    <text evidence="1">Binds 1 [4Fe-4S] cluster per subunit. The cluster is coordinated with 3 cysteines and an exchangeable S-adenosyl-L-methionine.</text>
</comment>
<comment type="pathway">
    <text evidence="1">Cofactor biosynthesis; thiamine diphosphate biosynthesis.</text>
</comment>
<comment type="similarity">
    <text evidence="1">Belongs to the ThiC family.</text>
</comment>